<proteinExistence type="inferred from homology"/>
<keyword id="KW-0963">Cytoplasm</keyword>
<keyword id="KW-0238">DNA-binding</keyword>
<keyword id="KW-0597">Phosphoprotein</keyword>
<keyword id="KW-1185">Reference proteome</keyword>
<keyword id="KW-0804">Transcription</keyword>
<keyword id="KW-0805">Transcription regulation</keyword>
<keyword id="KW-0902">Two-component regulatory system</keyword>
<sequence>MLVEDDHSISEMVDHYLTKEGFGIVHAFDGEEGIRLFQQGSYDLVLLDIMLPKLNGMDFLKIIREKSNIPVLMISAKDGDVDKALGLGFGADDYIAKPFSMIELTARVKAAIRRATQYSAEEPAVNKVIRIHQLAIDIDNVSVLKNGEPLQLTSTEWQLLCLFASNPKKVFTKEQIYRSVWNEEYFDDQNIINVHMRRLREKIEDDPSSPQYIKTLWGIGYKLGEF</sequence>
<feature type="chain" id="PRO_0000081391" description="Uncharacterized transcriptional regulatory protein YcbL">
    <location>
        <begin position="1"/>
        <end position="226"/>
    </location>
</feature>
<feature type="domain" description="Response regulatory" evidence="1">
    <location>
        <begin position="1"/>
        <end position="112"/>
    </location>
</feature>
<feature type="DNA-binding region" description="OmpR/PhoB-type" evidence="2">
    <location>
        <begin position="126"/>
        <end position="225"/>
    </location>
</feature>
<feature type="modified residue" description="4-aspartylphosphate" evidence="1">
    <location>
        <position position="48"/>
    </location>
</feature>
<feature type="sequence conflict" description="In Ref. 1; BAA06476." evidence="4" ref="1">
    <original>E</original>
    <variation>D</variation>
    <location>
        <position position="174"/>
    </location>
</feature>
<gene>
    <name type="primary">ycbL</name>
    <name type="ordered locus">BSU02550</name>
</gene>
<protein>
    <recommendedName>
        <fullName>Uncharacterized transcriptional regulatory protein YcbL</fullName>
    </recommendedName>
</protein>
<accession>P42244</accession>
<organism>
    <name type="scientific">Bacillus subtilis (strain 168)</name>
    <dbReference type="NCBI Taxonomy" id="224308"/>
    <lineage>
        <taxon>Bacteria</taxon>
        <taxon>Bacillati</taxon>
        <taxon>Bacillota</taxon>
        <taxon>Bacilli</taxon>
        <taxon>Bacillales</taxon>
        <taxon>Bacillaceae</taxon>
        <taxon>Bacillus</taxon>
    </lineage>
</organism>
<name>YCBL_BACSU</name>
<reference key="1">
    <citation type="journal article" date="1995" name="Microbiology">
        <title>Determination of a 21548 bp nucleotide sequence around the 24 degrees region of the Bacillus subtilis chromosome.</title>
        <authorList>
            <person name="Ogawa K."/>
            <person name="Akagawa E."/>
            <person name="Nakamura K."/>
            <person name="Yamane K."/>
        </authorList>
    </citation>
    <scope>NUCLEOTIDE SEQUENCE [GENOMIC DNA]</scope>
    <source>
        <strain>168</strain>
    </source>
</reference>
<reference key="2">
    <citation type="journal article" date="1997" name="Nature">
        <title>The complete genome sequence of the Gram-positive bacterium Bacillus subtilis.</title>
        <authorList>
            <person name="Kunst F."/>
            <person name="Ogasawara N."/>
            <person name="Moszer I."/>
            <person name="Albertini A.M."/>
            <person name="Alloni G."/>
            <person name="Azevedo V."/>
            <person name="Bertero M.G."/>
            <person name="Bessieres P."/>
            <person name="Bolotin A."/>
            <person name="Borchert S."/>
            <person name="Borriss R."/>
            <person name="Boursier L."/>
            <person name="Brans A."/>
            <person name="Braun M."/>
            <person name="Brignell S.C."/>
            <person name="Bron S."/>
            <person name="Brouillet S."/>
            <person name="Bruschi C.V."/>
            <person name="Caldwell B."/>
            <person name="Capuano V."/>
            <person name="Carter N.M."/>
            <person name="Choi S.-K."/>
            <person name="Codani J.-J."/>
            <person name="Connerton I.F."/>
            <person name="Cummings N.J."/>
            <person name="Daniel R.A."/>
            <person name="Denizot F."/>
            <person name="Devine K.M."/>
            <person name="Duesterhoeft A."/>
            <person name="Ehrlich S.D."/>
            <person name="Emmerson P.T."/>
            <person name="Entian K.-D."/>
            <person name="Errington J."/>
            <person name="Fabret C."/>
            <person name="Ferrari E."/>
            <person name="Foulger D."/>
            <person name="Fritz C."/>
            <person name="Fujita M."/>
            <person name="Fujita Y."/>
            <person name="Fuma S."/>
            <person name="Galizzi A."/>
            <person name="Galleron N."/>
            <person name="Ghim S.-Y."/>
            <person name="Glaser P."/>
            <person name="Goffeau A."/>
            <person name="Golightly E.J."/>
            <person name="Grandi G."/>
            <person name="Guiseppi G."/>
            <person name="Guy B.J."/>
            <person name="Haga K."/>
            <person name="Haiech J."/>
            <person name="Harwood C.R."/>
            <person name="Henaut A."/>
            <person name="Hilbert H."/>
            <person name="Holsappel S."/>
            <person name="Hosono S."/>
            <person name="Hullo M.-F."/>
            <person name="Itaya M."/>
            <person name="Jones L.-M."/>
            <person name="Joris B."/>
            <person name="Karamata D."/>
            <person name="Kasahara Y."/>
            <person name="Klaerr-Blanchard M."/>
            <person name="Klein C."/>
            <person name="Kobayashi Y."/>
            <person name="Koetter P."/>
            <person name="Koningstein G."/>
            <person name="Krogh S."/>
            <person name="Kumano M."/>
            <person name="Kurita K."/>
            <person name="Lapidus A."/>
            <person name="Lardinois S."/>
            <person name="Lauber J."/>
            <person name="Lazarevic V."/>
            <person name="Lee S.-M."/>
            <person name="Levine A."/>
            <person name="Liu H."/>
            <person name="Masuda S."/>
            <person name="Mauel C."/>
            <person name="Medigue C."/>
            <person name="Medina N."/>
            <person name="Mellado R.P."/>
            <person name="Mizuno M."/>
            <person name="Moestl D."/>
            <person name="Nakai S."/>
            <person name="Noback M."/>
            <person name="Noone D."/>
            <person name="O'Reilly M."/>
            <person name="Ogawa K."/>
            <person name="Ogiwara A."/>
            <person name="Oudega B."/>
            <person name="Park S.-H."/>
            <person name="Parro V."/>
            <person name="Pohl T.M."/>
            <person name="Portetelle D."/>
            <person name="Porwollik S."/>
            <person name="Prescott A.M."/>
            <person name="Presecan E."/>
            <person name="Pujic P."/>
            <person name="Purnelle B."/>
            <person name="Rapoport G."/>
            <person name="Rey M."/>
            <person name="Reynolds S."/>
            <person name="Rieger M."/>
            <person name="Rivolta C."/>
            <person name="Rocha E."/>
            <person name="Roche B."/>
            <person name="Rose M."/>
            <person name="Sadaie Y."/>
            <person name="Sato T."/>
            <person name="Scanlan E."/>
            <person name="Schleich S."/>
            <person name="Schroeter R."/>
            <person name="Scoffone F."/>
            <person name="Sekiguchi J."/>
            <person name="Sekowska A."/>
            <person name="Seror S.J."/>
            <person name="Serror P."/>
            <person name="Shin B.-S."/>
            <person name="Soldo B."/>
            <person name="Sorokin A."/>
            <person name="Tacconi E."/>
            <person name="Takagi T."/>
            <person name="Takahashi H."/>
            <person name="Takemaru K."/>
            <person name="Takeuchi M."/>
            <person name="Tamakoshi A."/>
            <person name="Tanaka T."/>
            <person name="Terpstra P."/>
            <person name="Tognoni A."/>
            <person name="Tosato V."/>
            <person name="Uchiyama S."/>
            <person name="Vandenbol M."/>
            <person name="Vannier F."/>
            <person name="Vassarotti A."/>
            <person name="Viari A."/>
            <person name="Wambutt R."/>
            <person name="Wedler E."/>
            <person name="Wedler H."/>
            <person name="Weitzenegger T."/>
            <person name="Winters P."/>
            <person name="Wipat A."/>
            <person name="Yamamoto H."/>
            <person name="Yamane K."/>
            <person name="Yasumoto K."/>
            <person name="Yata K."/>
            <person name="Yoshida K."/>
            <person name="Yoshikawa H.-F."/>
            <person name="Zumstein E."/>
            <person name="Yoshikawa H."/>
            <person name="Danchin A."/>
        </authorList>
    </citation>
    <scope>NUCLEOTIDE SEQUENCE [LARGE SCALE GENOMIC DNA]</scope>
    <source>
        <strain>168</strain>
    </source>
</reference>
<reference key="3">
    <citation type="journal article" date="2009" name="Microbiology">
        <title>From a consortium sequence to a unified sequence: the Bacillus subtilis 168 reference genome a decade later.</title>
        <authorList>
            <person name="Barbe V."/>
            <person name="Cruveiller S."/>
            <person name="Kunst F."/>
            <person name="Lenoble P."/>
            <person name="Meurice G."/>
            <person name="Sekowska A."/>
            <person name="Vallenet D."/>
            <person name="Wang T."/>
            <person name="Moszer I."/>
            <person name="Medigue C."/>
            <person name="Danchin A."/>
        </authorList>
    </citation>
    <scope>SEQUENCE REVISION TO 174</scope>
</reference>
<reference key="4">
    <citation type="journal article" date="2001" name="J. Bacteriol.">
        <title>Comprehensive DNA microarray analysis of Bacillus subtilis two-component regulatory systems.</title>
        <authorList>
            <person name="Kobayashi K."/>
            <person name="Ogura M."/>
            <person name="Yamaguchi H."/>
            <person name="Yoshida K."/>
            <person name="Ogasawara N."/>
            <person name="Tanaka T."/>
            <person name="Fujita Y."/>
        </authorList>
    </citation>
    <scope>FUNCTION</scope>
</reference>
<evidence type="ECO:0000255" key="1">
    <source>
        <dbReference type="PROSITE-ProRule" id="PRU00169"/>
    </source>
</evidence>
<evidence type="ECO:0000255" key="2">
    <source>
        <dbReference type="PROSITE-ProRule" id="PRU01091"/>
    </source>
</evidence>
<evidence type="ECO:0000269" key="3">
    <source>
    </source>
</evidence>
<evidence type="ECO:0000305" key="4"/>
<dbReference type="EMBL" id="D30808">
    <property type="protein sequence ID" value="BAA06476.1"/>
    <property type="molecule type" value="Genomic_DNA"/>
</dbReference>
<dbReference type="EMBL" id="AL009126">
    <property type="protein sequence ID" value="CAB12049.2"/>
    <property type="molecule type" value="Genomic_DNA"/>
</dbReference>
<dbReference type="PIR" id="F69753">
    <property type="entry name" value="F69753"/>
</dbReference>
<dbReference type="RefSeq" id="NP_388137.2">
    <property type="nucleotide sequence ID" value="NC_000964.3"/>
</dbReference>
<dbReference type="RefSeq" id="WP_009966453.1">
    <property type="nucleotide sequence ID" value="NZ_OZ025638.1"/>
</dbReference>
<dbReference type="SMR" id="P42244"/>
<dbReference type="FunCoup" id="P42244">
    <property type="interactions" value="60"/>
</dbReference>
<dbReference type="STRING" id="224308.BSU02550"/>
<dbReference type="PaxDb" id="224308-BSU02550"/>
<dbReference type="EnsemblBacteria" id="CAB12049">
    <property type="protein sequence ID" value="CAB12049"/>
    <property type="gene ID" value="BSU_02550"/>
</dbReference>
<dbReference type="GeneID" id="938400"/>
<dbReference type="KEGG" id="bsu:BSU02550"/>
<dbReference type="PATRIC" id="fig|224308.43.peg.260"/>
<dbReference type="eggNOG" id="COG0745">
    <property type="taxonomic scope" value="Bacteria"/>
</dbReference>
<dbReference type="InParanoid" id="P42244"/>
<dbReference type="OrthoDB" id="9790442at2"/>
<dbReference type="PhylomeDB" id="P42244"/>
<dbReference type="BioCyc" id="BSUB:BSU02550-MONOMER"/>
<dbReference type="Proteomes" id="UP000001570">
    <property type="component" value="Chromosome"/>
</dbReference>
<dbReference type="GO" id="GO:0005829">
    <property type="term" value="C:cytosol"/>
    <property type="evidence" value="ECO:0000318"/>
    <property type="project" value="GO_Central"/>
</dbReference>
<dbReference type="GO" id="GO:0032993">
    <property type="term" value="C:protein-DNA complex"/>
    <property type="evidence" value="ECO:0000318"/>
    <property type="project" value="GO_Central"/>
</dbReference>
<dbReference type="GO" id="GO:0000156">
    <property type="term" value="F:phosphorelay response regulator activity"/>
    <property type="evidence" value="ECO:0000318"/>
    <property type="project" value="GO_Central"/>
</dbReference>
<dbReference type="GO" id="GO:0000976">
    <property type="term" value="F:transcription cis-regulatory region binding"/>
    <property type="evidence" value="ECO:0000318"/>
    <property type="project" value="GO_Central"/>
</dbReference>
<dbReference type="GO" id="GO:0006355">
    <property type="term" value="P:regulation of DNA-templated transcription"/>
    <property type="evidence" value="ECO:0000318"/>
    <property type="project" value="GO_Central"/>
</dbReference>
<dbReference type="CDD" id="cd17574">
    <property type="entry name" value="REC_OmpR"/>
    <property type="match status" value="1"/>
</dbReference>
<dbReference type="CDD" id="cd00383">
    <property type="entry name" value="trans_reg_C"/>
    <property type="match status" value="1"/>
</dbReference>
<dbReference type="FunFam" id="3.40.50.2300:FF:000001">
    <property type="entry name" value="DNA-binding response regulator PhoB"/>
    <property type="match status" value="1"/>
</dbReference>
<dbReference type="FunFam" id="1.10.10.10:FF:000018">
    <property type="entry name" value="DNA-binding response regulator ResD"/>
    <property type="match status" value="1"/>
</dbReference>
<dbReference type="Gene3D" id="3.40.50.2300">
    <property type="match status" value="1"/>
</dbReference>
<dbReference type="Gene3D" id="6.10.250.690">
    <property type="match status" value="1"/>
</dbReference>
<dbReference type="Gene3D" id="1.10.10.10">
    <property type="entry name" value="Winged helix-like DNA-binding domain superfamily/Winged helix DNA-binding domain"/>
    <property type="match status" value="1"/>
</dbReference>
<dbReference type="InterPro" id="IPR011006">
    <property type="entry name" value="CheY-like_superfamily"/>
</dbReference>
<dbReference type="InterPro" id="IPR001867">
    <property type="entry name" value="OmpR/PhoB-type_DNA-bd"/>
</dbReference>
<dbReference type="InterPro" id="IPR016032">
    <property type="entry name" value="Sig_transdc_resp-reg_C-effctor"/>
</dbReference>
<dbReference type="InterPro" id="IPR001789">
    <property type="entry name" value="Sig_transdc_resp-reg_receiver"/>
</dbReference>
<dbReference type="InterPro" id="IPR039420">
    <property type="entry name" value="WalR-like"/>
</dbReference>
<dbReference type="InterPro" id="IPR036388">
    <property type="entry name" value="WH-like_DNA-bd_sf"/>
</dbReference>
<dbReference type="PANTHER" id="PTHR48111">
    <property type="entry name" value="REGULATOR OF RPOS"/>
    <property type="match status" value="1"/>
</dbReference>
<dbReference type="PANTHER" id="PTHR48111:SF26">
    <property type="entry name" value="STAGE 0 SPORULATION PROTEIN A HOMOLOG"/>
    <property type="match status" value="1"/>
</dbReference>
<dbReference type="Pfam" id="PF00072">
    <property type="entry name" value="Response_reg"/>
    <property type="match status" value="1"/>
</dbReference>
<dbReference type="Pfam" id="PF00486">
    <property type="entry name" value="Trans_reg_C"/>
    <property type="match status" value="1"/>
</dbReference>
<dbReference type="SMART" id="SM00448">
    <property type="entry name" value="REC"/>
    <property type="match status" value="1"/>
</dbReference>
<dbReference type="SMART" id="SM00862">
    <property type="entry name" value="Trans_reg_C"/>
    <property type="match status" value="1"/>
</dbReference>
<dbReference type="SUPFAM" id="SSF46894">
    <property type="entry name" value="C-terminal effector domain of the bipartite response regulators"/>
    <property type="match status" value="1"/>
</dbReference>
<dbReference type="SUPFAM" id="SSF52172">
    <property type="entry name" value="CheY-like"/>
    <property type="match status" value="1"/>
</dbReference>
<dbReference type="PROSITE" id="PS51755">
    <property type="entry name" value="OMPR_PHOB"/>
    <property type="match status" value="1"/>
</dbReference>
<dbReference type="PROSITE" id="PS50110">
    <property type="entry name" value="RESPONSE_REGULATORY"/>
    <property type="match status" value="1"/>
</dbReference>
<comment type="function">
    <text evidence="3">Member of the two-component regulatory system YcbM/YcbL.</text>
</comment>
<comment type="subcellular location">
    <subcellularLocation>
        <location evidence="4">Cytoplasm</location>
    </subcellularLocation>
</comment>
<comment type="PTM">
    <text evidence="4">Phosphorylated by YcbM.</text>
</comment>